<reference key="1">
    <citation type="journal article" date="2007" name="J. Bacteriol.">
        <title>Complete genome of acute rheumatic fever-associated serotype M5 Streptococcus pyogenes strain Manfredo.</title>
        <authorList>
            <person name="Holden M.T.G."/>
            <person name="Scott A."/>
            <person name="Cherevach I."/>
            <person name="Chillingworth T."/>
            <person name="Churcher C."/>
            <person name="Cronin A."/>
            <person name="Dowd L."/>
            <person name="Feltwell T."/>
            <person name="Hamlin N."/>
            <person name="Holroyd S."/>
            <person name="Jagels K."/>
            <person name="Moule S."/>
            <person name="Mungall K."/>
            <person name="Quail M.A."/>
            <person name="Price C."/>
            <person name="Rabbinowitsch E."/>
            <person name="Sharp S."/>
            <person name="Skelton J."/>
            <person name="Whitehead S."/>
            <person name="Barrell B.G."/>
            <person name="Kehoe M."/>
            <person name="Parkhill J."/>
        </authorList>
    </citation>
    <scope>NUCLEOTIDE SEQUENCE [LARGE SCALE GENOMIC DNA]</scope>
    <source>
        <strain>Manfredo</strain>
    </source>
</reference>
<name>FOLD_STRPG</name>
<organism>
    <name type="scientific">Streptococcus pyogenes serotype M5 (strain Manfredo)</name>
    <dbReference type="NCBI Taxonomy" id="160491"/>
    <lineage>
        <taxon>Bacteria</taxon>
        <taxon>Bacillati</taxon>
        <taxon>Bacillota</taxon>
        <taxon>Bacilli</taxon>
        <taxon>Lactobacillales</taxon>
        <taxon>Streptococcaceae</taxon>
        <taxon>Streptococcus</taxon>
    </lineage>
</organism>
<dbReference type="EC" id="1.5.1.5" evidence="1"/>
<dbReference type="EC" id="3.5.4.9" evidence="1"/>
<dbReference type="EMBL" id="AM295007">
    <property type="protein sequence ID" value="CAM29954.1"/>
    <property type="molecule type" value="Genomic_DNA"/>
</dbReference>
<dbReference type="RefSeq" id="WP_002989114.1">
    <property type="nucleotide sequence ID" value="NC_009332.1"/>
</dbReference>
<dbReference type="SMR" id="A2RDM9"/>
<dbReference type="KEGG" id="spf:SpyM50619"/>
<dbReference type="HOGENOM" id="CLU_034045_2_1_9"/>
<dbReference type="UniPathway" id="UPA00193"/>
<dbReference type="GO" id="GO:0005829">
    <property type="term" value="C:cytosol"/>
    <property type="evidence" value="ECO:0007669"/>
    <property type="project" value="TreeGrafter"/>
</dbReference>
<dbReference type="GO" id="GO:0004477">
    <property type="term" value="F:methenyltetrahydrofolate cyclohydrolase activity"/>
    <property type="evidence" value="ECO:0007669"/>
    <property type="project" value="UniProtKB-UniRule"/>
</dbReference>
<dbReference type="GO" id="GO:0004488">
    <property type="term" value="F:methylenetetrahydrofolate dehydrogenase (NADP+) activity"/>
    <property type="evidence" value="ECO:0007669"/>
    <property type="project" value="UniProtKB-UniRule"/>
</dbReference>
<dbReference type="GO" id="GO:0000105">
    <property type="term" value="P:L-histidine biosynthetic process"/>
    <property type="evidence" value="ECO:0007669"/>
    <property type="project" value="UniProtKB-KW"/>
</dbReference>
<dbReference type="GO" id="GO:0009086">
    <property type="term" value="P:methionine biosynthetic process"/>
    <property type="evidence" value="ECO:0007669"/>
    <property type="project" value="UniProtKB-KW"/>
</dbReference>
<dbReference type="GO" id="GO:0006164">
    <property type="term" value="P:purine nucleotide biosynthetic process"/>
    <property type="evidence" value="ECO:0007669"/>
    <property type="project" value="UniProtKB-KW"/>
</dbReference>
<dbReference type="GO" id="GO:0035999">
    <property type="term" value="P:tetrahydrofolate interconversion"/>
    <property type="evidence" value="ECO:0007669"/>
    <property type="project" value="UniProtKB-UniRule"/>
</dbReference>
<dbReference type="CDD" id="cd01080">
    <property type="entry name" value="NAD_bind_m-THF_DH_Cyclohyd"/>
    <property type="match status" value="1"/>
</dbReference>
<dbReference type="FunFam" id="3.40.50.10860:FF:000001">
    <property type="entry name" value="Bifunctional protein FolD"/>
    <property type="match status" value="1"/>
</dbReference>
<dbReference type="FunFam" id="3.40.50.720:FF:000094">
    <property type="entry name" value="Bifunctional protein FolD"/>
    <property type="match status" value="1"/>
</dbReference>
<dbReference type="Gene3D" id="3.40.50.10860">
    <property type="entry name" value="Leucine Dehydrogenase, chain A, domain 1"/>
    <property type="match status" value="1"/>
</dbReference>
<dbReference type="Gene3D" id="3.40.50.720">
    <property type="entry name" value="NAD(P)-binding Rossmann-like Domain"/>
    <property type="match status" value="1"/>
</dbReference>
<dbReference type="HAMAP" id="MF_01576">
    <property type="entry name" value="THF_DHG_CYH"/>
    <property type="match status" value="1"/>
</dbReference>
<dbReference type="InterPro" id="IPR046346">
    <property type="entry name" value="Aminoacid_DH-like_N_sf"/>
</dbReference>
<dbReference type="InterPro" id="IPR036291">
    <property type="entry name" value="NAD(P)-bd_dom_sf"/>
</dbReference>
<dbReference type="InterPro" id="IPR000672">
    <property type="entry name" value="THF_DH/CycHdrlase"/>
</dbReference>
<dbReference type="InterPro" id="IPR020630">
    <property type="entry name" value="THF_DH/CycHdrlase_cat_dom"/>
</dbReference>
<dbReference type="InterPro" id="IPR020867">
    <property type="entry name" value="THF_DH/CycHdrlase_CS"/>
</dbReference>
<dbReference type="InterPro" id="IPR020631">
    <property type="entry name" value="THF_DH/CycHdrlase_NAD-bd_dom"/>
</dbReference>
<dbReference type="NCBIfam" id="NF008058">
    <property type="entry name" value="PRK10792.1"/>
    <property type="match status" value="1"/>
</dbReference>
<dbReference type="NCBIfam" id="NF010776">
    <property type="entry name" value="PRK14179.1"/>
    <property type="match status" value="1"/>
</dbReference>
<dbReference type="NCBIfam" id="NF010783">
    <property type="entry name" value="PRK14186.1"/>
    <property type="match status" value="1"/>
</dbReference>
<dbReference type="NCBIfam" id="NF010785">
    <property type="entry name" value="PRK14188.1"/>
    <property type="match status" value="1"/>
</dbReference>
<dbReference type="PANTHER" id="PTHR48099:SF5">
    <property type="entry name" value="C-1-TETRAHYDROFOLATE SYNTHASE, CYTOPLASMIC"/>
    <property type="match status" value="1"/>
</dbReference>
<dbReference type="PANTHER" id="PTHR48099">
    <property type="entry name" value="C-1-TETRAHYDROFOLATE SYNTHASE, CYTOPLASMIC-RELATED"/>
    <property type="match status" value="1"/>
</dbReference>
<dbReference type="Pfam" id="PF00763">
    <property type="entry name" value="THF_DHG_CYH"/>
    <property type="match status" value="1"/>
</dbReference>
<dbReference type="Pfam" id="PF02882">
    <property type="entry name" value="THF_DHG_CYH_C"/>
    <property type="match status" value="1"/>
</dbReference>
<dbReference type="PRINTS" id="PR00085">
    <property type="entry name" value="THFDHDRGNASE"/>
</dbReference>
<dbReference type="SUPFAM" id="SSF53223">
    <property type="entry name" value="Aminoacid dehydrogenase-like, N-terminal domain"/>
    <property type="match status" value="1"/>
</dbReference>
<dbReference type="SUPFAM" id="SSF51735">
    <property type="entry name" value="NAD(P)-binding Rossmann-fold domains"/>
    <property type="match status" value="1"/>
</dbReference>
<dbReference type="PROSITE" id="PS00766">
    <property type="entry name" value="THF_DHG_CYH_1"/>
    <property type="match status" value="1"/>
</dbReference>
<dbReference type="PROSITE" id="PS00767">
    <property type="entry name" value="THF_DHG_CYH_2"/>
    <property type="match status" value="1"/>
</dbReference>
<keyword id="KW-0028">Amino-acid biosynthesis</keyword>
<keyword id="KW-0368">Histidine biosynthesis</keyword>
<keyword id="KW-0378">Hydrolase</keyword>
<keyword id="KW-0486">Methionine biosynthesis</keyword>
<keyword id="KW-0511">Multifunctional enzyme</keyword>
<keyword id="KW-0521">NADP</keyword>
<keyword id="KW-0554">One-carbon metabolism</keyword>
<keyword id="KW-0560">Oxidoreductase</keyword>
<keyword id="KW-0658">Purine biosynthesis</keyword>
<proteinExistence type="inferred from homology"/>
<evidence type="ECO:0000255" key="1">
    <source>
        <dbReference type="HAMAP-Rule" id="MF_01576"/>
    </source>
</evidence>
<gene>
    <name evidence="1" type="primary">folD</name>
    <name type="ordered locus">SpyM50619</name>
</gene>
<comment type="function">
    <text evidence="1">Catalyzes the oxidation of 5,10-methylenetetrahydrofolate to 5,10-methenyltetrahydrofolate and then the hydrolysis of 5,10-methenyltetrahydrofolate to 10-formyltetrahydrofolate.</text>
</comment>
<comment type="catalytic activity">
    <reaction evidence="1">
        <text>(6R)-5,10-methylene-5,6,7,8-tetrahydrofolate + NADP(+) = (6R)-5,10-methenyltetrahydrofolate + NADPH</text>
        <dbReference type="Rhea" id="RHEA:22812"/>
        <dbReference type="ChEBI" id="CHEBI:15636"/>
        <dbReference type="ChEBI" id="CHEBI:57455"/>
        <dbReference type="ChEBI" id="CHEBI:57783"/>
        <dbReference type="ChEBI" id="CHEBI:58349"/>
        <dbReference type="EC" id="1.5.1.5"/>
    </reaction>
</comment>
<comment type="catalytic activity">
    <reaction evidence="1">
        <text>(6R)-5,10-methenyltetrahydrofolate + H2O = (6R)-10-formyltetrahydrofolate + H(+)</text>
        <dbReference type="Rhea" id="RHEA:23700"/>
        <dbReference type="ChEBI" id="CHEBI:15377"/>
        <dbReference type="ChEBI" id="CHEBI:15378"/>
        <dbReference type="ChEBI" id="CHEBI:57455"/>
        <dbReference type="ChEBI" id="CHEBI:195366"/>
        <dbReference type="EC" id="3.5.4.9"/>
    </reaction>
</comment>
<comment type="pathway">
    <text evidence="1">One-carbon metabolism; tetrahydrofolate interconversion.</text>
</comment>
<comment type="subunit">
    <text evidence="1">Homodimer.</text>
</comment>
<comment type="similarity">
    <text evidence="1">Belongs to the tetrahydrofolate dehydrogenase/cyclohydrolase family.</text>
</comment>
<sequence length="284" mass="31096">MTELIDGKALAQKMQQELAAKVNNLKQKKGIVPGLAVILVGDDPASQVYVRNKERAALTVGFKSETVRLSEFICQEELIAVIERYNADNTIHGILVQLPLPNHINDKKIILAIDPKKDVDGFHPMNTGHLWSGRPLMVPCTPSGIMELLREYNVNLEGKHAVIIGRSNIVGKPMAQLLLDKNATVTLTHSRTRQLEEVCRCADVLIVAIGQGHFITKQYIKEGAIVIDVGMNRDDNGKLIGDVAFDEVAEVAAKITPVPGGVGPMTIAMLLEQTYQSALRSTHK</sequence>
<feature type="chain" id="PRO_0000305883" description="Bifunctional protein FolD">
    <location>
        <begin position="1"/>
        <end position="284"/>
    </location>
</feature>
<feature type="binding site" evidence="1">
    <location>
        <begin position="165"/>
        <end position="167"/>
    </location>
    <ligand>
        <name>NADP(+)</name>
        <dbReference type="ChEBI" id="CHEBI:58349"/>
    </ligand>
</feature>
<feature type="binding site" evidence="1">
    <location>
        <position position="190"/>
    </location>
    <ligand>
        <name>NADP(+)</name>
        <dbReference type="ChEBI" id="CHEBI:58349"/>
    </ligand>
</feature>
<accession>A2RDM9</accession>
<protein>
    <recommendedName>
        <fullName evidence="1">Bifunctional protein FolD</fullName>
    </recommendedName>
    <domain>
        <recommendedName>
            <fullName evidence="1">Methylenetetrahydrofolate dehydrogenase</fullName>
            <ecNumber evidence="1">1.5.1.5</ecNumber>
        </recommendedName>
    </domain>
    <domain>
        <recommendedName>
            <fullName evidence="1">Methenyltetrahydrofolate cyclohydrolase</fullName>
            <ecNumber evidence="1">3.5.4.9</ecNumber>
        </recommendedName>
    </domain>
</protein>